<keyword id="KW-0238">DNA-binding</keyword>
<keyword id="KW-0539">Nucleus</keyword>
<keyword id="KW-0597">Phosphoprotein</keyword>
<keyword id="KW-0656">Proto-oncogene</keyword>
<keyword id="KW-1185">Reference proteome</keyword>
<comment type="function">
    <text evidence="1">Proto-oncogene that may play a role in differentiation and lymphopoiesis. NF-kappa-B is a pleiotropic transcription factor which is present in almost all cell types and is involved in many biological processed such as inflammation, immunity, differentiation, cell growth, tumorigenesis and apoptosis. NF-kappa-B is a homo- or heterodimeric complex formed by the Rel-like domain-containing proteins RELA/p65, RELB, NFKB1/p105, NFKB1/p50, REL and NFKB2/p52. The dimers bind at kappa-B sites in the DNA of their target genes and the individual dimers have distinct preferences for different kappa-B sites that they can bind with distinguishable affinity and specificity. Different dimer combinations act as transcriptional activators or repressors, respectively. NF-kappa-B is controlled by various mechanisms of post-translational modification and subcellular compartmentalization as well as by interactions with other cofactors or corepressors. NF-kappa-B complexes are held in the cytoplasm in an inactive state complexed with members of the NF-kappa-B inhibitor (I-kappa-B) family. In a conventional activation pathway, I-kappa-B is phosphorylated by I-kappa-B kinases (IKKs) in response to different activators, subsequently degraded thus liberating the active NF-kappa-B complex which translocates to the nucleus. The NF-kappa-B heterodimer RELA/p65-c-Rel is a transcriptional activator (By similarity).</text>
</comment>
<comment type="subunit">
    <text evidence="1">Homodimer; component of the NF-kappa-B c-Rel-c-Rel complex. Component of the NF-KAPPA-B p65-c-Rel complex (By similarity).</text>
</comment>
<comment type="subcellular location">
    <subcellularLocation>
        <location>Nucleus</location>
    </subcellularLocation>
</comment>
<dbReference type="EMBL" id="X03508">
    <property type="protein sequence ID" value="CAA27220.1"/>
    <property type="molecule type" value="Genomic_DNA"/>
</dbReference>
<dbReference type="EMBL" id="X03616">
    <property type="protein sequence ID" value="CAA27220.1"/>
    <property type="status" value="JOINED"/>
    <property type="molecule type" value="Genomic_DNA"/>
</dbReference>
<dbReference type="EMBL" id="X03617">
    <property type="protein sequence ID" value="CAA27220.1"/>
    <property type="status" value="JOINED"/>
    <property type="molecule type" value="Genomic_DNA"/>
</dbReference>
<dbReference type="EMBL" id="X03618">
    <property type="protein sequence ID" value="CAA27220.1"/>
    <property type="status" value="JOINED"/>
    <property type="molecule type" value="Genomic_DNA"/>
</dbReference>
<dbReference type="EMBL" id="X03619">
    <property type="protein sequence ID" value="CAA27220.1"/>
    <property type="status" value="JOINED"/>
    <property type="molecule type" value="Genomic_DNA"/>
</dbReference>
<dbReference type="EMBL" id="X03620">
    <property type="protein sequence ID" value="CAA27220.1"/>
    <property type="status" value="JOINED"/>
    <property type="molecule type" value="Genomic_DNA"/>
</dbReference>
<dbReference type="EMBL" id="X03621">
    <property type="protein sequence ID" value="CAA27220.1"/>
    <property type="status" value="JOINED"/>
    <property type="molecule type" value="Genomic_DNA"/>
</dbReference>
<dbReference type="EMBL" id="X03622">
    <property type="protein sequence ID" value="CAA27220.1"/>
    <property type="status" value="JOINED"/>
    <property type="molecule type" value="Genomic_DNA"/>
</dbReference>
<dbReference type="EMBL" id="X03623">
    <property type="protein sequence ID" value="CAA27220.1"/>
    <property type="status" value="JOINED"/>
    <property type="molecule type" value="Genomic_DNA"/>
</dbReference>
<dbReference type="EMBL" id="K02455">
    <property type="protein sequence ID" value="AAA99433.1"/>
    <property type="molecule type" value="Genomic_DNA"/>
</dbReference>
<dbReference type="EMBL" id="K02447">
    <property type="protein sequence ID" value="AAA99433.1"/>
    <property type="status" value="JOINED"/>
    <property type="molecule type" value="Genomic_DNA"/>
</dbReference>
<dbReference type="EMBL" id="K02448">
    <property type="protein sequence ID" value="AAA99433.1"/>
    <property type="status" value="JOINED"/>
    <property type="molecule type" value="Genomic_DNA"/>
</dbReference>
<dbReference type="EMBL" id="K02449">
    <property type="protein sequence ID" value="AAA99433.1"/>
    <property type="status" value="JOINED"/>
    <property type="molecule type" value="Genomic_DNA"/>
</dbReference>
<dbReference type="EMBL" id="K02450">
    <property type="protein sequence ID" value="AAA99433.1"/>
    <property type="status" value="JOINED"/>
    <property type="molecule type" value="Genomic_DNA"/>
</dbReference>
<dbReference type="EMBL" id="K02451">
    <property type="protein sequence ID" value="AAA99433.1"/>
    <property type="status" value="JOINED"/>
    <property type="molecule type" value="Genomic_DNA"/>
</dbReference>
<dbReference type="EMBL" id="K02452">
    <property type="protein sequence ID" value="AAA99433.1"/>
    <property type="status" value="JOINED"/>
    <property type="molecule type" value="Genomic_DNA"/>
</dbReference>
<dbReference type="EMBL" id="K02453">
    <property type="protein sequence ID" value="AAA99433.1"/>
    <property type="status" value="JOINED"/>
    <property type="molecule type" value="Genomic_DNA"/>
</dbReference>
<dbReference type="EMBL" id="K02454">
    <property type="protein sequence ID" value="AAA99433.1"/>
    <property type="status" value="JOINED"/>
    <property type="molecule type" value="Genomic_DNA"/>
</dbReference>
<dbReference type="PIR" id="A01377">
    <property type="entry name" value="TVTK"/>
</dbReference>
<dbReference type="SMR" id="P01125"/>
<dbReference type="FunCoup" id="P01125">
    <property type="interactions" value="160"/>
</dbReference>
<dbReference type="InParanoid" id="P01125"/>
<dbReference type="OrthoDB" id="7881762at2759"/>
<dbReference type="Proteomes" id="UP000001645">
    <property type="component" value="Unplaced"/>
</dbReference>
<dbReference type="GO" id="GO:0005737">
    <property type="term" value="C:cytoplasm"/>
    <property type="evidence" value="ECO:0007669"/>
    <property type="project" value="InterPro"/>
</dbReference>
<dbReference type="GO" id="GO:0005634">
    <property type="term" value="C:nucleus"/>
    <property type="evidence" value="ECO:0007669"/>
    <property type="project" value="UniProtKB-SubCell"/>
</dbReference>
<dbReference type="GO" id="GO:0000981">
    <property type="term" value="F:DNA-binding transcription factor activity, RNA polymerase II-specific"/>
    <property type="evidence" value="ECO:0007669"/>
    <property type="project" value="TreeGrafter"/>
</dbReference>
<dbReference type="GO" id="GO:0000978">
    <property type="term" value="F:RNA polymerase II cis-regulatory region sequence-specific DNA binding"/>
    <property type="evidence" value="ECO:0007669"/>
    <property type="project" value="TreeGrafter"/>
</dbReference>
<dbReference type="GO" id="GO:0007249">
    <property type="term" value="P:canonical NF-kappaB signal transduction"/>
    <property type="evidence" value="ECO:0007669"/>
    <property type="project" value="TreeGrafter"/>
</dbReference>
<dbReference type="GO" id="GO:0033554">
    <property type="term" value="P:cellular response to stress"/>
    <property type="evidence" value="ECO:0007669"/>
    <property type="project" value="TreeGrafter"/>
</dbReference>
<dbReference type="GO" id="GO:0006954">
    <property type="term" value="P:inflammatory response"/>
    <property type="evidence" value="ECO:0007669"/>
    <property type="project" value="TreeGrafter"/>
</dbReference>
<dbReference type="GO" id="GO:0045087">
    <property type="term" value="P:innate immune response"/>
    <property type="evidence" value="ECO:0007669"/>
    <property type="project" value="TreeGrafter"/>
</dbReference>
<dbReference type="GO" id="GO:0038061">
    <property type="term" value="P:non-canonical NF-kappaB signal transduction"/>
    <property type="evidence" value="ECO:0007669"/>
    <property type="project" value="TreeGrafter"/>
</dbReference>
<dbReference type="GO" id="GO:0045944">
    <property type="term" value="P:positive regulation of transcription by RNA polymerase II"/>
    <property type="evidence" value="ECO:0007669"/>
    <property type="project" value="TreeGrafter"/>
</dbReference>
<dbReference type="GO" id="GO:0034097">
    <property type="term" value="P:response to cytokine"/>
    <property type="evidence" value="ECO:0007669"/>
    <property type="project" value="TreeGrafter"/>
</dbReference>
<dbReference type="CDD" id="cd01177">
    <property type="entry name" value="IPT_NFkappaB"/>
    <property type="match status" value="1"/>
</dbReference>
<dbReference type="CDD" id="cd07933">
    <property type="entry name" value="RHD-n_c-Rel"/>
    <property type="match status" value="1"/>
</dbReference>
<dbReference type="FunFam" id="2.60.40.340:FF:000003">
    <property type="entry name" value="NFkB p65 transcription factor"/>
    <property type="match status" value="1"/>
</dbReference>
<dbReference type="FunFam" id="2.60.40.10:FF:000046">
    <property type="entry name" value="Nuclear factor NF-kappa-B p105 subunit"/>
    <property type="match status" value="1"/>
</dbReference>
<dbReference type="Gene3D" id="2.60.40.10">
    <property type="entry name" value="Immunoglobulins"/>
    <property type="match status" value="1"/>
</dbReference>
<dbReference type="Gene3D" id="2.60.40.340">
    <property type="entry name" value="Rel homology domain (RHD), DNA-binding domain"/>
    <property type="match status" value="1"/>
</dbReference>
<dbReference type="InterPro" id="IPR013783">
    <property type="entry name" value="Ig-like_fold"/>
</dbReference>
<dbReference type="InterPro" id="IPR014756">
    <property type="entry name" value="Ig_E-set"/>
</dbReference>
<dbReference type="InterPro" id="IPR002909">
    <property type="entry name" value="IPT_dom"/>
</dbReference>
<dbReference type="InterPro" id="IPR033926">
    <property type="entry name" value="IPT_NFkappaB"/>
</dbReference>
<dbReference type="InterPro" id="IPR000451">
    <property type="entry name" value="NFkB/Dor"/>
</dbReference>
<dbReference type="InterPro" id="IPR008967">
    <property type="entry name" value="p53-like_TF_DNA-bd_sf"/>
</dbReference>
<dbReference type="InterPro" id="IPR042845">
    <property type="entry name" value="RHD-n_c-Rel"/>
</dbReference>
<dbReference type="InterPro" id="IPR030492">
    <property type="entry name" value="RHD_CS"/>
</dbReference>
<dbReference type="InterPro" id="IPR032397">
    <property type="entry name" value="RHD_dimer"/>
</dbReference>
<dbReference type="InterPro" id="IPR011539">
    <property type="entry name" value="RHD_DNA_bind_dom"/>
</dbReference>
<dbReference type="InterPro" id="IPR037059">
    <property type="entry name" value="RHD_DNA_bind_dom_sf"/>
</dbReference>
<dbReference type="PANTHER" id="PTHR24169">
    <property type="entry name" value="NUCLEAR FACTOR NF-KAPPA-B PROTEIN"/>
    <property type="match status" value="1"/>
</dbReference>
<dbReference type="PANTHER" id="PTHR24169:SF4">
    <property type="entry name" value="PROTO-ONCOGENE C-REL"/>
    <property type="match status" value="1"/>
</dbReference>
<dbReference type="Pfam" id="PF16179">
    <property type="entry name" value="RHD_dimer"/>
    <property type="match status" value="1"/>
</dbReference>
<dbReference type="Pfam" id="PF00554">
    <property type="entry name" value="RHD_DNA_bind"/>
    <property type="match status" value="1"/>
</dbReference>
<dbReference type="PRINTS" id="PR00057">
    <property type="entry name" value="NFKBTNSCPFCT"/>
</dbReference>
<dbReference type="SMART" id="SM00429">
    <property type="entry name" value="IPT"/>
    <property type="match status" value="1"/>
</dbReference>
<dbReference type="SUPFAM" id="SSF81296">
    <property type="entry name" value="E set domains"/>
    <property type="match status" value="1"/>
</dbReference>
<dbReference type="SUPFAM" id="SSF49417">
    <property type="entry name" value="p53-like transcription factors"/>
    <property type="match status" value="1"/>
</dbReference>
<dbReference type="PROSITE" id="PS01204">
    <property type="entry name" value="REL_1"/>
    <property type="match status" value="1"/>
</dbReference>
<dbReference type="PROSITE" id="PS50254">
    <property type="entry name" value="REL_2"/>
    <property type="match status" value="1"/>
</dbReference>
<organism>
    <name type="scientific">Meleagris gallopavo</name>
    <name type="common">Wild turkey</name>
    <dbReference type="NCBI Taxonomy" id="9103"/>
    <lineage>
        <taxon>Eukaryota</taxon>
        <taxon>Metazoa</taxon>
        <taxon>Chordata</taxon>
        <taxon>Craniata</taxon>
        <taxon>Vertebrata</taxon>
        <taxon>Euteleostomi</taxon>
        <taxon>Archelosauria</taxon>
        <taxon>Archosauria</taxon>
        <taxon>Dinosauria</taxon>
        <taxon>Saurischia</taxon>
        <taxon>Theropoda</taxon>
        <taxon>Coelurosauria</taxon>
        <taxon>Aves</taxon>
        <taxon>Neognathae</taxon>
        <taxon>Galloanserae</taxon>
        <taxon>Galliformes</taxon>
        <taxon>Phasianidae</taxon>
        <taxon>Meleagridinae</taxon>
        <taxon>Meleagris</taxon>
    </lineage>
</organism>
<accession>P01125</accession>
<evidence type="ECO:0000250" key="1"/>
<evidence type="ECO:0000255" key="2"/>
<evidence type="ECO:0000255" key="3">
    <source>
        <dbReference type="PROSITE-ProRule" id="PRU00265"/>
    </source>
</evidence>
<evidence type="ECO:0000256" key="4">
    <source>
        <dbReference type="SAM" id="MobiDB-lite"/>
    </source>
</evidence>
<evidence type="ECO:0000305" key="5"/>
<name>REL_MELGA</name>
<reference key="1">
    <citation type="journal article" date="1984" name="J. Virol.">
        <title>Nucleic acid sequences of the oncogene v-rel in reticuloendotheliosis virus strain T and its cellular homolog, the proto-oncogene c-rel.</title>
        <authorList>
            <person name="Wilhelmsen K.C."/>
            <person name="Eggleton K."/>
            <person name="Temin H.M."/>
        </authorList>
    </citation>
    <scope>NUCLEOTIDE SEQUENCE [GENOMIC DNA]</scope>
</reference>
<reference key="2">
    <citation type="submission" date="1991-07" db="EMBL/GenBank/DDBJ databases">
        <authorList>
            <person name="Temin H.M."/>
        </authorList>
    </citation>
    <scope>NUCLEOTIDE SEQUENCE [GENOMIC DNA] OF 531-538</scope>
</reference>
<sequence length="538" mass="60002">GISEPYIEIFEQPRQRGMRFRYKCEGRSAGSIPGEHSTDNNKTFPSIQILNYFGKVKIRTTLVTKNEPYKPHPHDLVGKDCRDGYYEAEFGPERRVLSFQNLGIQCVKKKDLKESISLRISKKINPFNVPEEQLHNIDEYDLNVVRLCFQAFLPDEHGNYTLALPPLISNPIYDNGAPNTAELRICRVNKNCGSVKGGDEIFLLCDKVQKDDIEVRFVLGNWEAKGSFSQADVHRQVAIVFRTPPFLRDITEPITVKMQLRRPSDQEVSEPVDFRYLPDEEDSYGNKAKRQRSTLAWQKLIQDCGSAVTERPKAAPIPTVNPEGKLIKKEPNMFSPTLMLPGLGTLASSSQMYPACSQMPTQPAQLGPGKQDTLHSCWQQLYSPSPSASSLLSMHSHNSFTAEVPQPGAQGSSSLPAYHDNPLNWPDEKDSSFYRNFGNTHGMGAALVSAADMQSVSSSSIVQGTHQASATAASIMNMETNDMNCTSLNFEKYTQMLNVSNHRQQLHQVPATCPPGSAWQHSLSSQPNVADRAVYSSF</sequence>
<proteinExistence type="inferred from homology"/>
<protein>
    <recommendedName>
        <fullName>Proto-oncogene c-Rel</fullName>
    </recommendedName>
    <alternativeName>
        <fullName>p68</fullName>
    </alternativeName>
</protein>
<feature type="chain" id="PRO_0000205168" description="Proto-oncogene c-Rel">
    <location>
        <begin position="1" status="less than"/>
        <end position="538" status="greater than"/>
    </location>
</feature>
<feature type="domain" description="RHD" evidence="3">
    <location>
        <begin position="5"/>
        <end position="294"/>
    </location>
</feature>
<feature type="region of interest" description="Disordered" evidence="4">
    <location>
        <begin position="401"/>
        <end position="422"/>
    </location>
</feature>
<feature type="short sequence motif" description="Nuclear localization signal" evidence="2">
    <location>
        <begin position="287"/>
        <end position="292"/>
    </location>
</feature>
<feature type="modified residue" description="Phosphoserine; by PKA" evidence="2">
    <location>
        <position position="264"/>
    </location>
</feature>
<feature type="sequence conflict" description="In Ref. 1; AAA99433." evidence="5" ref="1">
    <original>Y</original>
    <variation>C</variation>
    <location>
        <position position="6"/>
    </location>
</feature>
<feature type="sequence conflict" description="In Ref. 1; AAA99433." evidence="5" ref="1">
    <original>G</original>
    <variation>R</variation>
    <location>
        <position position="176"/>
    </location>
</feature>
<feature type="sequence conflict" description="In Ref. 1; AAA99433." evidence="5" ref="1">
    <original>G</original>
    <variation>D</variation>
    <location>
        <position position="220"/>
    </location>
</feature>
<feature type="sequence conflict" description="In Ref. 1; AAA99433." evidence="5" ref="1">
    <original>V</original>
    <variation>M</variation>
    <location>
        <position position="272"/>
    </location>
</feature>
<feature type="sequence conflict" description="In Ref. 1; AAA99433." evidence="5" ref="1">
    <original>E</original>
    <variation>K</variation>
    <location>
        <position position="281"/>
    </location>
</feature>
<feature type="sequence conflict" description="In Ref. 1; AAA99433." evidence="5" ref="1">
    <original>P</original>
    <variation>L</variation>
    <location>
        <position position="368"/>
    </location>
</feature>
<feature type="non-terminal residue">
    <location>
        <position position="1"/>
    </location>
</feature>
<feature type="non-terminal residue">
    <location>
        <position position="538"/>
    </location>
</feature>
<gene>
    <name type="primary">REL</name>
</gene>